<organism>
    <name type="scientific">Shigella boydii serotype 4 (strain Sb227)</name>
    <dbReference type="NCBI Taxonomy" id="300268"/>
    <lineage>
        <taxon>Bacteria</taxon>
        <taxon>Pseudomonadati</taxon>
        <taxon>Pseudomonadota</taxon>
        <taxon>Gammaproteobacteria</taxon>
        <taxon>Enterobacterales</taxon>
        <taxon>Enterobacteriaceae</taxon>
        <taxon>Shigella</taxon>
    </lineage>
</organism>
<reference key="1">
    <citation type="journal article" date="2005" name="Nucleic Acids Res.">
        <title>Genome dynamics and diversity of Shigella species, the etiologic agents of bacillary dysentery.</title>
        <authorList>
            <person name="Yang F."/>
            <person name="Yang J."/>
            <person name="Zhang X."/>
            <person name="Chen L."/>
            <person name="Jiang Y."/>
            <person name="Yan Y."/>
            <person name="Tang X."/>
            <person name="Wang J."/>
            <person name="Xiong Z."/>
            <person name="Dong J."/>
            <person name="Xue Y."/>
            <person name="Zhu Y."/>
            <person name="Xu X."/>
            <person name="Sun L."/>
            <person name="Chen S."/>
            <person name="Nie H."/>
            <person name="Peng J."/>
            <person name="Xu J."/>
            <person name="Wang Y."/>
            <person name="Yuan Z."/>
            <person name="Wen Y."/>
            <person name="Yao Z."/>
            <person name="Shen Y."/>
            <person name="Qiang B."/>
            <person name="Hou Y."/>
            <person name="Yu J."/>
            <person name="Jin Q."/>
        </authorList>
    </citation>
    <scope>NUCLEOTIDE SEQUENCE [LARGE SCALE GENOMIC DNA]</scope>
    <source>
        <strain>Sb227</strain>
    </source>
</reference>
<dbReference type="EC" id="3.6.1.40" evidence="1"/>
<dbReference type="EMBL" id="CP000036">
    <property type="protein sequence ID" value="ABB68252.1"/>
    <property type="molecule type" value="Genomic_DNA"/>
</dbReference>
<dbReference type="RefSeq" id="WP_001299253.1">
    <property type="nucleotide sequence ID" value="NC_007613.1"/>
</dbReference>
<dbReference type="SMR" id="Q31UK6"/>
<dbReference type="GeneID" id="75204769"/>
<dbReference type="KEGG" id="sbo:SBO_3789"/>
<dbReference type="HOGENOM" id="CLU_025908_4_0_6"/>
<dbReference type="UniPathway" id="UPA00908">
    <property type="reaction ID" value="UER00885"/>
</dbReference>
<dbReference type="Proteomes" id="UP000007067">
    <property type="component" value="Chromosome"/>
</dbReference>
<dbReference type="GO" id="GO:0008894">
    <property type="term" value="F:guanosine-5'-triphosphate,3'-diphosphate diphosphatase activity"/>
    <property type="evidence" value="ECO:0007669"/>
    <property type="project" value="UniProtKB-UniRule"/>
</dbReference>
<dbReference type="GO" id="GO:0015974">
    <property type="term" value="P:guanosine pentaphosphate catabolic process"/>
    <property type="evidence" value="ECO:0007669"/>
    <property type="project" value="InterPro"/>
</dbReference>
<dbReference type="GO" id="GO:0015970">
    <property type="term" value="P:guanosine tetraphosphate biosynthetic process"/>
    <property type="evidence" value="ECO:0007669"/>
    <property type="project" value="UniProtKB-UniRule"/>
</dbReference>
<dbReference type="GO" id="GO:0015949">
    <property type="term" value="P:nucleobase-containing small molecule interconversion"/>
    <property type="evidence" value="ECO:0007669"/>
    <property type="project" value="TreeGrafter"/>
</dbReference>
<dbReference type="CDD" id="cd24117">
    <property type="entry name" value="ASKHA_NBD_EcGppA-like"/>
    <property type="match status" value="1"/>
</dbReference>
<dbReference type="FunFam" id="1.10.3210.10:FF:000004">
    <property type="entry name" value="Guanosine-5'-triphosphate,3'-diphosphate pyrophosphatase"/>
    <property type="match status" value="1"/>
</dbReference>
<dbReference type="FunFam" id="3.30.420.150:FF:000001">
    <property type="entry name" value="Guanosine-5'-triphosphate,3'-diphosphate pyrophosphatase"/>
    <property type="match status" value="1"/>
</dbReference>
<dbReference type="FunFam" id="3.30.420.40:FF:000023">
    <property type="entry name" value="Guanosine-5'-triphosphate,3'-diphosphate pyrophosphatase"/>
    <property type="match status" value="1"/>
</dbReference>
<dbReference type="Gene3D" id="3.30.420.40">
    <property type="match status" value="1"/>
</dbReference>
<dbReference type="Gene3D" id="3.30.420.150">
    <property type="entry name" value="Exopolyphosphatase. Domain 2"/>
    <property type="match status" value="1"/>
</dbReference>
<dbReference type="Gene3D" id="1.10.3210.10">
    <property type="entry name" value="Hypothetical protein af1432"/>
    <property type="match status" value="1"/>
</dbReference>
<dbReference type="HAMAP" id="MF_01550">
    <property type="entry name" value="GppA"/>
    <property type="match status" value="1"/>
</dbReference>
<dbReference type="InterPro" id="IPR043129">
    <property type="entry name" value="ATPase_NBD"/>
</dbReference>
<dbReference type="InterPro" id="IPR050273">
    <property type="entry name" value="GppA/Ppx_hydrolase"/>
</dbReference>
<dbReference type="InterPro" id="IPR023709">
    <property type="entry name" value="Guo-5TP_3DP_PyrP"/>
</dbReference>
<dbReference type="InterPro" id="IPR048950">
    <property type="entry name" value="Ppx_GppA_C"/>
</dbReference>
<dbReference type="InterPro" id="IPR003695">
    <property type="entry name" value="Ppx_GppA_N"/>
</dbReference>
<dbReference type="InterPro" id="IPR030673">
    <property type="entry name" value="PyroPPase_GppA_Ppx"/>
</dbReference>
<dbReference type="NCBIfam" id="NF008260">
    <property type="entry name" value="PRK11031.1"/>
    <property type="match status" value="1"/>
</dbReference>
<dbReference type="PANTHER" id="PTHR30005">
    <property type="entry name" value="EXOPOLYPHOSPHATASE"/>
    <property type="match status" value="1"/>
</dbReference>
<dbReference type="PANTHER" id="PTHR30005:SF0">
    <property type="entry name" value="RETROGRADE REGULATION PROTEIN 2"/>
    <property type="match status" value="1"/>
</dbReference>
<dbReference type="Pfam" id="PF02541">
    <property type="entry name" value="Ppx-GppA"/>
    <property type="match status" value="1"/>
</dbReference>
<dbReference type="Pfam" id="PF21447">
    <property type="entry name" value="Ppx-GppA_III"/>
    <property type="match status" value="1"/>
</dbReference>
<dbReference type="PIRSF" id="PIRSF001267">
    <property type="entry name" value="Pyrophosphatase_GppA_Ppx"/>
    <property type="match status" value="1"/>
</dbReference>
<dbReference type="SUPFAM" id="SSF53067">
    <property type="entry name" value="Actin-like ATPase domain"/>
    <property type="match status" value="2"/>
</dbReference>
<dbReference type="SUPFAM" id="SSF109604">
    <property type="entry name" value="HD-domain/PDEase-like"/>
    <property type="match status" value="1"/>
</dbReference>
<name>GPPA_SHIBS</name>
<sequence length="494" mass="54885">MGSTSSLYAAIDLGSNSFHMLVVREVAGSIQTLTRIKRKVRLAAGLNSENALSNEAMERGWQCLRLFAERLQDIPPSQIRVVATATLRLAVNAGDFIAKAQEILGCPVQVISGEEEARLIYQGVAHTTGGADQRLVVDIGGASTELVTGTGAQTTSLFSLSMGCVTWLERYFADRNLGQENFDAAEKAAREVLRPVADELRYHGWKVCVGASGTVQALQEIMMAQGMDERITLEKLQQLKQRAIHCGRLEELEIDGLTLERALVFPSGLAILIAIFTELNIQCMTLAGGALREGLVYGMLHLAVEQDIRSRTLRNIQRRFMIDIDQAQRVAKVAANFFDQVEKEWHLEAISRDLLISACQLHEIGLSVDFKQAPQHAAYLVRNLDLPGFTPAQKKLLATLLLNQTNPVDLSSLHQQNAVPPRVAEQLCRLLRLAIIFASRRRDDLVPEMTLQANHELLTLTLPQGWLTQHPLGKEIIAQESQWQSYVHWPLEVH</sequence>
<evidence type="ECO:0000255" key="1">
    <source>
        <dbReference type="HAMAP-Rule" id="MF_01550"/>
    </source>
</evidence>
<protein>
    <recommendedName>
        <fullName evidence="1">Guanosine-5'-triphosphate,3'-diphosphate pyrophosphatase</fullName>
        <ecNumber evidence="1">3.6.1.40</ecNumber>
    </recommendedName>
    <alternativeName>
        <fullName evidence="1">Guanosine pentaphosphate phosphohydrolase</fullName>
    </alternativeName>
    <alternativeName>
        <fullName evidence="1">pppGpp-5'-phosphohydrolase</fullName>
    </alternativeName>
</protein>
<gene>
    <name evidence="1" type="primary">gppA</name>
    <name type="ordered locus">SBO_3789</name>
</gene>
<keyword id="KW-0378">Hydrolase</keyword>
<accession>Q31UK6</accession>
<comment type="function">
    <text evidence="1">Catalyzes the conversion of pppGpp to ppGpp. Guanosine pentaphosphate (pppGpp) is a cytoplasmic signaling molecule which together with ppGpp controls the 'stringent response', an adaptive process that allows bacteria to respond to amino acid starvation, resulting in the coordinated regulation of numerous cellular activities.</text>
</comment>
<comment type="catalytic activity">
    <reaction evidence="1">
        <text>guanosine 3'-diphosphate 5'-triphosphate + H2O = guanosine 3',5'-bis(diphosphate) + phosphate + H(+)</text>
        <dbReference type="Rhea" id="RHEA:13073"/>
        <dbReference type="ChEBI" id="CHEBI:15377"/>
        <dbReference type="ChEBI" id="CHEBI:15378"/>
        <dbReference type="ChEBI" id="CHEBI:43474"/>
        <dbReference type="ChEBI" id="CHEBI:77828"/>
        <dbReference type="ChEBI" id="CHEBI:142410"/>
        <dbReference type="EC" id="3.6.1.40"/>
    </reaction>
</comment>
<comment type="pathway">
    <text evidence="1">Purine metabolism; ppGpp biosynthesis; ppGpp from GTP: step 2/2.</text>
</comment>
<comment type="similarity">
    <text evidence="1">Belongs to the GppA/Ppx family. GppA subfamily.</text>
</comment>
<proteinExistence type="inferred from homology"/>
<feature type="chain" id="PRO_0000314497" description="Guanosine-5'-triphosphate,3'-diphosphate pyrophosphatase">
    <location>
        <begin position="1"/>
        <end position="494"/>
    </location>
</feature>